<protein>
    <recommendedName>
        <fullName evidence="1">Aspartate carbamoyltransferase catalytic subunit</fullName>
        <ecNumber evidence="1">2.1.3.2</ecNumber>
    </recommendedName>
    <alternativeName>
        <fullName evidence="1">Aspartate transcarbamylase</fullName>
        <shortName evidence="1">ATCase</shortName>
    </alternativeName>
</protein>
<comment type="function">
    <text evidence="1">Catalyzes the condensation of carbamoyl phosphate and aspartate to form carbamoyl aspartate and inorganic phosphate, the committed step in the de novo pyrimidine nucleotide biosynthesis pathway.</text>
</comment>
<comment type="catalytic activity">
    <reaction evidence="1">
        <text>carbamoyl phosphate + L-aspartate = N-carbamoyl-L-aspartate + phosphate + H(+)</text>
        <dbReference type="Rhea" id="RHEA:20013"/>
        <dbReference type="ChEBI" id="CHEBI:15378"/>
        <dbReference type="ChEBI" id="CHEBI:29991"/>
        <dbReference type="ChEBI" id="CHEBI:32814"/>
        <dbReference type="ChEBI" id="CHEBI:43474"/>
        <dbReference type="ChEBI" id="CHEBI:58228"/>
        <dbReference type="EC" id="2.1.3.2"/>
    </reaction>
</comment>
<comment type="pathway">
    <text evidence="1">Pyrimidine metabolism; UMP biosynthesis via de novo pathway; (S)-dihydroorotate from bicarbonate: step 2/3.</text>
</comment>
<comment type="subunit">
    <text evidence="1">Heterododecamer (2C3:3R2) of six catalytic PyrB chains organized as two trimers (C3), and six regulatory PyrI chains organized as three dimers (R2).</text>
</comment>
<comment type="similarity">
    <text evidence="1">Belongs to the aspartate/ornithine carbamoyltransferase superfamily. ATCase family.</text>
</comment>
<gene>
    <name evidence="1" type="primary">pyrB</name>
    <name type="ordered locus">CLI_3380</name>
</gene>
<evidence type="ECO:0000255" key="1">
    <source>
        <dbReference type="HAMAP-Rule" id="MF_00001"/>
    </source>
</evidence>
<name>PYRB_CLOBL</name>
<keyword id="KW-0665">Pyrimidine biosynthesis</keyword>
<keyword id="KW-0808">Transferase</keyword>
<organism>
    <name type="scientific">Clostridium botulinum (strain Langeland / NCTC 10281 / Type F)</name>
    <dbReference type="NCBI Taxonomy" id="441772"/>
    <lineage>
        <taxon>Bacteria</taxon>
        <taxon>Bacillati</taxon>
        <taxon>Bacillota</taxon>
        <taxon>Clostridia</taxon>
        <taxon>Eubacteriales</taxon>
        <taxon>Clostridiaceae</taxon>
        <taxon>Clostridium</taxon>
    </lineage>
</organism>
<sequence>MLKGRNLLDPMDFSLEELEEVFKLADEIIEEPEKFLHVCDGKILATLFYEPSTRTRFSFEAAMLRLGGQVIGFSEPNSSSVAKGESVADTIRTVGCYADIAAMRHPKEGAPAIAAMYSDIPVINAGDGSHQHPTQTLTDLLTIRSLKGDLSNLTIGCCGDLKFGRTVHSLVKALSRYKNNKFVFMSPEELKIPDYIRKEILEKNNIEYKEVSKMEDAMAELDILYMTRVQRERFFNEDDYVRLKDSYILDGEKMKYAKKDMMVLHPLPRVNEIAYEIDQDPRGCYFKQAKYGMYVRMALIAKLLGVR</sequence>
<proteinExistence type="inferred from homology"/>
<dbReference type="EC" id="2.1.3.2" evidence="1"/>
<dbReference type="EMBL" id="CP000728">
    <property type="protein sequence ID" value="ABS42732.1"/>
    <property type="molecule type" value="Genomic_DNA"/>
</dbReference>
<dbReference type="RefSeq" id="WP_012100985.1">
    <property type="nucleotide sequence ID" value="NC_009699.1"/>
</dbReference>
<dbReference type="SMR" id="A7GII2"/>
<dbReference type="KEGG" id="cbf:CLI_3380"/>
<dbReference type="HOGENOM" id="CLU_043846_1_2_9"/>
<dbReference type="UniPathway" id="UPA00070">
    <property type="reaction ID" value="UER00116"/>
</dbReference>
<dbReference type="Proteomes" id="UP000002410">
    <property type="component" value="Chromosome"/>
</dbReference>
<dbReference type="GO" id="GO:0016597">
    <property type="term" value="F:amino acid binding"/>
    <property type="evidence" value="ECO:0007669"/>
    <property type="project" value="InterPro"/>
</dbReference>
<dbReference type="GO" id="GO:0004070">
    <property type="term" value="F:aspartate carbamoyltransferase activity"/>
    <property type="evidence" value="ECO:0007669"/>
    <property type="project" value="UniProtKB-UniRule"/>
</dbReference>
<dbReference type="GO" id="GO:0006207">
    <property type="term" value="P:'de novo' pyrimidine nucleobase biosynthetic process"/>
    <property type="evidence" value="ECO:0007669"/>
    <property type="project" value="InterPro"/>
</dbReference>
<dbReference type="GO" id="GO:0044205">
    <property type="term" value="P:'de novo' UMP biosynthetic process"/>
    <property type="evidence" value="ECO:0007669"/>
    <property type="project" value="UniProtKB-UniRule"/>
</dbReference>
<dbReference type="GO" id="GO:0006520">
    <property type="term" value="P:amino acid metabolic process"/>
    <property type="evidence" value="ECO:0007669"/>
    <property type="project" value="InterPro"/>
</dbReference>
<dbReference type="FunFam" id="3.40.50.1370:FF:000002">
    <property type="entry name" value="Aspartate carbamoyltransferase 2"/>
    <property type="match status" value="1"/>
</dbReference>
<dbReference type="Gene3D" id="3.40.50.1370">
    <property type="entry name" value="Aspartate/ornithine carbamoyltransferase"/>
    <property type="match status" value="2"/>
</dbReference>
<dbReference type="HAMAP" id="MF_00001">
    <property type="entry name" value="Asp_carb_tr"/>
    <property type="match status" value="1"/>
</dbReference>
<dbReference type="InterPro" id="IPR006132">
    <property type="entry name" value="Asp/Orn_carbamoyltranf_P-bd"/>
</dbReference>
<dbReference type="InterPro" id="IPR006130">
    <property type="entry name" value="Asp/Orn_carbamoylTrfase"/>
</dbReference>
<dbReference type="InterPro" id="IPR036901">
    <property type="entry name" value="Asp/Orn_carbamoylTrfase_sf"/>
</dbReference>
<dbReference type="InterPro" id="IPR002082">
    <property type="entry name" value="Asp_carbamoyltransf"/>
</dbReference>
<dbReference type="InterPro" id="IPR006131">
    <property type="entry name" value="Asp_carbamoyltransf_Asp/Orn-bd"/>
</dbReference>
<dbReference type="NCBIfam" id="TIGR00670">
    <property type="entry name" value="asp_carb_tr"/>
    <property type="match status" value="1"/>
</dbReference>
<dbReference type="NCBIfam" id="NF002032">
    <property type="entry name" value="PRK00856.1"/>
    <property type="match status" value="1"/>
</dbReference>
<dbReference type="PANTHER" id="PTHR45753:SF6">
    <property type="entry name" value="ASPARTATE CARBAMOYLTRANSFERASE"/>
    <property type="match status" value="1"/>
</dbReference>
<dbReference type="PANTHER" id="PTHR45753">
    <property type="entry name" value="ORNITHINE CARBAMOYLTRANSFERASE, MITOCHONDRIAL"/>
    <property type="match status" value="1"/>
</dbReference>
<dbReference type="Pfam" id="PF00185">
    <property type="entry name" value="OTCace"/>
    <property type="match status" value="1"/>
</dbReference>
<dbReference type="Pfam" id="PF02729">
    <property type="entry name" value="OTCace_N"/>
    <property type="match status" value="1"/>
</dbReference>
<dbReference type="PRINTS" id="PR00100">
    <property type="entry name" value="AOTCASE"/>
</dbReference>
<dbReference type="PRINTS" id="PR00101">
    <property type="entry name" value="ATCASE"/>
</dbReference>
<dbReference type="SUPFAM" id="SSF53671">
    <property type="entry name" value="Aspartate/ornithine carbamoyltransferase"/>
    <property type="match status" value="1"/>
</dbReference>
<dbReference type="PROSITE" id="PS00097">
    <property type="entry name" value="CARBAMOYLTRANSFERASE"/>
    <property type="match status" value="1"/>
</dbReference>
<feature type="chain" id="PRO_0000321090" description="Aspartate carbamoyltransferase catalytic subunit">
    <location>
        <begin position="1"/>
        <end position="307"/>
    </location>
</feature>
<feature type="binding site" evidence="1">
    <location>
        <position position="54"/>
    </location>
    <ligand>
        <name>carbamoyl phosphate</name>
        <dbReference type="ChEBI" id="CHEBI:58228"/>
    </ligand>
</feature>
<feature type="binding site" evidence="1">
    <location>
        <position position="55"/>
    </location>
    <ligand>
        <name>carbamoyl phosphate</name>
        <dbReference type="ChEBI" id="CHEBI:58228"/>
    </ligand>
</feature>
<feature type="binding site" evidence="1">
    <location>
        <position position="83"/>
    </location>
    <ligand>
        <name>L-aspartate</name>
        <dbReference type="ChEBI" id="CHEBI:29991"/>
    </ligand>
</feature>
<feature type="binding site" evidence="1">
    <location>
        <position position="104"/>
    </location>
    <ligand>
        <name>carbamoyl phosphate</name>
        <dbReference type="ChEBI" id="CHEBI:58228"/>
    </ligand>
</feature>
<feature type="binding site" evidence="1">
    <location>
        <position position="132"/>
    </location>
    <ligand>
        <name>carbamoyl phosphate</name>
        <dbReference type="ChEBI" id="CHEBI:58228"/>
    </ligand>
</feature>
<feature type="binding site" evidence="1">
    <location>
        <position position="135"/>
    </location>
    <ligand>
        <name>carbamoyl phosphate</name>
        <dbReference type="ChEBI" id="CHEBI:58228"/>
    </ligand>
</feature>
<feature type="binding site" evidence="1">
    <location>
        <position position="165"/>
    </location>
    <ligand>
        <name>L-aspartate</name>
        <dbReference type="ChEBI" id="CHEBI:29991"/>
    </ligand>
</feature>
<feature type="binding site" evidence="1">
    <location>
        <position position="228"/>
    </location>
    <ligand>
        <name>L-aspartate</name>
        <dbReference type="ChEBI" id="CHEBI:29991"/>
    </ligand>
</feature>
<feature type="binding site" evidence="1">
    <location>
        <position position="267"/>
    </location>
    <ligand>
        <name>carbamoyl phosphate</name>
        <dbReference type="ChEBI" id="CHEBI:58228"/>
    </ligand>
</feature>
<feature type="binding site" evidence="1">
    <location>
        <position position="268"/>
    </location>
    <ligand>
        <name>carbamoyl phosphate</name>
        <dbReference type="ChEBI" id="CHEBI:58228"/>
    </ligand>
</feature>
<accession>A7GII2</accession>
<reference key="1">
    <citation type="submission" date="2007-06" db="EMBL/GenBank/DDBJ databases">
        <authorList>
            <person name="Brinkac L.M."/>
            <person name="Daugherty S."/>
            <person name="Dodson R.J."/>
            <person name="Madupu R."/>
            <person name="Brown J.L."/>
            <person name="Bruce D."/>
            <person name="Detter C."/>
            <person name="Munk C."/>
            <person name="Smith L.A."/>
            <person name="Smith T.J."/>
            <person name="White O."/>
            <person name="Brettin T.S."/>
        </authorList>
    </citation>
    <scope>NUCLEOTIDE SEQUENCE [LARGE SCALE GENOMIC DNA]</scope>
    <source>
        <strain>Langeland / NCTC 10281 / Type F</strain>
    </source>
</reference>